<sequence length="284" mass="30716">MPTYALLGATGATGSAILRCLLASPPPDLDLNILVRSKQKLLKSFPTLTTTISPRIHIIQGNSTDTIALQQCLEDASVAFMCVADNASNKGVSLTADTVTAIVTTLGMLRKLHGSAYNAPTILQLRSASLNPKLSCQVPRLVYNIVSFCLHYSHLDIVKACEHYEAAAAKGLLSYIYVDPPTIHDAFGPNRTGHKLISCKPDVCDKQETALSYADLGAGFVEIASRKEDFLNQPVGVTATGKAKETWGVLAGFLFDGAKGRARAWWEEERPMSKPQNLFLYCGM</sequence>
<proteinExistence type="evidence at transcript level"/>
<comment type="function">
    <text evidence="1 4 5 8 11 12 13">Averufin oxidase A; part of the fragmented gene cluster that mediates the biosynthesis of dothistromin (DOTH), a polyketide toxin very similar in structure to the aflatoxin precursor, versicolorin B (PubMed:12039746, PubMed:17683963, PubMed:22069571, PubMed:23207690, PubMed:23448391). The first step of the pathway is the conversion of acetate to norsolorinic acid (NOR) and requires the fatty acid synthase subunits hexA and hexB, as well as the polyketide synthase pksA (PubMed:16649078, PubMed:23207690). PksA combines a hexanoyl starter unit and 7 malonyl-CoA extender units to synthesize the precursor NOR (By similarity). The hexanoyl starter unit is provided to the acyl-carrier protein (ACP) domain by the fungal fatty acid synthase hexA/hexB (By similarity). The second step is the conversion of NOR to averantin (AVN) and requires the norsolorinic acid ketoreductase nor1, which catalyzes the dehydration of norsolorinic acid to form (1'S)-averantin (PubMed:23207690). The cytochrome P450 monooxygenase avnA then catalyzes the hydroxylation of AVN to 5'hydroxyaverantin (HAVN) (PubMed:23207690). The next step is performed by adhA that transforms HAVN to averufin (AVF) (PubMed:23207690). Averufin might then be converted to hydroxyversicolorone by cypX and avfA (PubMed:23207690). Hydroxyversicolorone is further converted versiconal hemiacetal acetate (VHA) by moxY (PubMed:23207690). VHA is then the substrate for the versiconal hemiacetal acetate esterase est1 to yield versiconal (VAL) (PubMed:23207690). Versicolorin B synthase vbsA then converts VAL to versicolorin B (VERB) by closing the bisfuran ring (PubMed:16649078, PubMed:23207690). Then, the activity of the versicolorin B desaturase verB leads to versicolorin A (VERA) (PubMed:23207690). DotB, a predicted chloroperoxidase, may perform epoxidation of the A-ring of VERA (PubMed:23207690). Alternatively, a cytochrome P450, such as cypX or avnA could catalyze this step (PubMed:23207690). It is also possible that another, uncharacterized, cytochrome P450 enzyme is responsible for this step (PubMed:23207690). Opening of the epoxide could potentially be achieved by the epoxide hydrolase epoA (PubMed:23207690). However, epoA seems not to be required for DOTH biosynthesis, but other epoxide hydrolases may have the ability to complement this hydrolysis (PubMed:23207690). Alternatively, opening of the epoxide ring could be achieved non-enzymatically (PubMed:23207690). The next step is the deoxygenation of ring A to yield the 5,8-dihydroxyanthraquinone which is most likely catalyzed by the NADPH dehydrogenase encoded by ver1 (PubMed:23207690). The last stages of DOTH biosynthesis are proposed to involve hydroxylation of the bisfuran (PubMed:23207690). OrdB and norB might have oxidative roles here (PubMed:23207690). An alternative possibility is that cytochrome P450 monoogenases such as avnA and cypX might perform these steps in addition to previously proposed steps (PubMed:23207690).</text>
</comment>
<comment type="pathway">
    <text evidence="8 12">Mycotoxin biosynthesis.</text>
</comment>
<comment type="induction">
    <text evidence="6 7">Expression is positively regulated by the dothistromin-specific transcription factor aflR (PubMed:23207690). Dothistromin biosynthetic proteins are co-regulated, showing a high level of expression at ealy exponential phase with a subsequent decline in older cultures (PubMed:17683963).</text>
</comment>
<comment type="similarity">
    <text evidence="10">Belongs to the avfA family.</text>
</comment>
<feature type="signal peptide" evidence="2">
    <location>
        <begin position="1"/>
        <end position="23"/>
    </location>
</feature>
<feature type="chain" id="PRO_0000443466" description="Averufin oxidase A">
    <location>
        <begin position="24"/>
        <end position="284"/>
    </location>
</feature>
<feature type="glycosylation site" description="N-linked (GlcNAc...) asparagine" evidence="3">
    <location>
        <position position="62"/>
    </location>
</feature>
<feature type="glycosylation site" description="N-linked (GlcNAc...) asparagine" evidence="3">
    <location>
        <position position="86"/>
    </location>
</feature>
<feature type="glycosylation site" description="N-linked (GlcNAc...) asparagine" evidence="3">
    <location>
        <position position="190"/>
    </location>
</feature>
<reference key="1">
    <citation type="journal article" date="2012" name="PLoS Genet.">
        <title>The genomes of the fungal plant pathogens Cladosporium fulvum and Dothistroma septosporum reveal adaptation to different hosts and lifestyles but also signatures of common ancestry.</title>
        <authorList>
            <person name="de Wit P.J.G.M."/>
            <person name="van der Burgt A."/>
            <person name="Oekmen B."/>
            <person name="Stergiopoulos I."/>
            <person name="Abd-Elsalam K.A."/>
            <person name="Aerts A.L."/>
            <person name="Bahkali A.H."/>
            <person name="Beenen H.G."/>
            <person name="Chettri P."/>
            <person name="Cox M.P."/>
            <person name="Datema E."/>
            <person name="de Vries R.P."/>
            <person name="Dhillon B."/>
            <person name="Ganley A.R."/>
            <person name="Griffiths S.A."/>
            <person name="Guo Y."/>
            <person name="Hamelin R.C."/>
            <person name="Henrissat B."/>
            <person name="Kabir M.S."/>
            <person name="Jashni M.K."/>
            <person name="Kema G."/>
            <person name="Klaubauf S."/>
            <person name="Lapidus A."/>
            <person name="Levasseur A."/>
            <person name="Lindquist E."/>
            <person name="Mehrabi R."/>
            <person name="Ohm R.A."/>
            <person name="Owen T.J."/>
            <person name="Salamov A."/>
            <person name="Schwelm A."/>
            <person name="Schijlen E."/>
            <person name="Sun H."/>
            <person name="van den Burg H.A."/>
            <person name="van Ham R.C.H.J."/>
            <person name="Zhang S."/>
            <person name="Goodwin S.B."/>
            <person name="Grigoriev I.V."/>
            <person name="Collemare J."/>
            <person name="Bradshaw R.E."/>
        </authorList>
    </citation>
    <scope>NUCLEOTIDE SEQUENCE [LARGE SCALE GENOMIC DNA]</scope>
    <source>
        <strain>NZE10 / CBS 128990</strain>
    </source>
</reference>
<reference key="2">
    <citation type="journal article" date="2012" name="PLoS Pathog.">
        <title>Diverse lifestyles and strategies of plant pathogenesis encoded in the genomes of eighteen Dothideomycetes fungi.</title>
        <authorList>
            <person name="Ohm R.A."/>
            <person name="Feau N."/>
            <person name="Henrissat B."/>
            <person name="Schoch C.L."/>
            <person name="Horwitz B.A."/>
            <person name="Barry K.W."/>
            <person name="Condon B.J."/>
            <person name="Copeland A.C."/>
            <person name="Dhillon B."/>
            <person name="Glaser F."/>
            <person name="Hesse C.N."/>
            <person name="Kosti I."/>
            <person name="LaButti K."/>
            <person name="Lindquist E.A."/>
            <person name="Lucas S."/>
            <person name="Salamov A.A."/>
            <person name="Bradshaw R.E."/>
            <person name="Ciuffetti L."/>
            <person name="Hamelin R.C."/>
            <person name="Kema G.H.J."/>
            <person name="Lawrence C."/>
            <person name="Scott J.A."/>
            <person name="Spatafora J.W."/>
            <person name="Turgeon B.G."/>
            <person name="de Wit P.J.G.M."/>
            <person name="Zhong S."/>
            <person name="Goodwin S.B."/>
            <person name="Grigoriev I.V."/>
        </authorList>
    </citation>
    <scope>NUCLEOTIDE SEQUENCE [LARGE SCALE GENOMIC DNA]</scope>
    <source>
        <strain>NZE10 / CBS 128990</strain>
    </source>
</reference>
<reference key="3">
    <citation type="journal article" date="2002" name="Appl. Environ. Microbiol.">
        <title>Dothistroma pini, a forest pathogen, contains homologs of aflatoxin biosynthetic pathway genes.</title>
        <authorList>
            <person name="Bradshaw R.E."/>
            <person name="Bhatnagar D."/>
            <person name="Ganley R.J."/>
            <person name="Gillman C.J."/>
            <person name="Monahan B.J."/>
            <person name="Seconi J.M."/>
        </authorList>
    </citation>
    <scope>FUNCTION</scope>
</reference>
<reference key="4">
    <citation type="journal article" date="2006" name="Mycopathologia">
        <title>A polyketide synthase gene required for biosynthesis of the aflatoxin-like toxin, dothistromin.</title>
        <authorList>
            <person name="Bradshaw R.E."/>
            <person name="Jin H."/>
            <person name="Morgan B.S."/>
            <person name="Schwelm A."/>
            <person name="Teddy O.R."/>
            <person name="Young C.A."/>
            <person name="Zhang S."/>
        </authorList>
    </citation>
    <scope>FUNCTION</scope>
</reference>
<reference key="5">
    <citation type="journal article" date="2007" name="Fungal Genet. Biol.">
        <title>A fragmented aflatoxin-like gene cluster in the forest pathogen Dothistroma septosporum.</title>
        <authorList>
            <person name="Zhang S."/>
            <person name="Schwelm A."/>
            <person name="Jin H."/>
            <person name="Collins L.J."/>
            <person name="Bradshaw R.E."/>
        </authorList>
    </citation>
    <scope>FUNCTION</scope>
    <scope>INDUCTION</scope>
</reference>
<reference key="6">
    <citation type="journal article" date="2010" name="Toxins">
        <title>Genetics of dothistromin biosynthesis of Dothistroma septosporum: an update.</title>
        <authorList>
            <person name="Schwelm A."/>
            <person name="Bradshaw R.E."/>
        </authorList>
    </citation>
    <scope>REVIEW ON FUNCTION</scope>
    <scope>PATHWAY</scope>
</reference>
<reference key="7">
    <citation type="journal article" date="2013" name="Fungal Genet. Biol.">
        <title>Dothistromin genes at multiple separate loci are regulated by AflR.</title>
        <authorList>
            <person name="Chettri P."/>
            <person name="Ehrlich K.C."/>
            <person name="Cary J.W."/>
            <person name="Collemare J."/>
            <person name="Cox M.P."/>
            <person name="Griffiths S.A."/>
            <person name="Olson M.A."/>
            <person name="de Wit P.J."/>
            <person name="Bradshaw R.E."/>
        </authorList>
    </citation>
    <scope>FUNCTION</scope>
    <scope>INDUCTION</scope>
    <scope>PATHWAY</scope>
</reference>
<reference key="8">
    <citation type="journal article" date="2013" name="New Phytol.">
        <title>Fragmentation of an aflatoxin-like gene cluster in a forest pathogen.</title>
        <authorList>
            <person name="Bradshaw R.E."/>
            <person name="Slot J.C."/>
            <person name="Moore G.G."/>
            <person name="Chettri P."/>
            <person name="de Wit P.J."/>
            <person name="Ehrlich K.C."/>
            <person name="Ganley A.R."/>
            <person name="Olson M.A."/>
            <person name="Rokas A."/>
            <person name="Carbone I."/>
            <person name="Cox M.P."/>
        </authorList>
    </citation>
    <scope>FUNCTION</scope>
</reference>
<gene>
    <name evidence="9" type="primary">avfA</name>
    <name type="ORF">DOTSEDRAFT_75546</name>
</gene>
<name>AVFA_DOTSN</name>
<organism>
    <name type="scientific">Dothistroma septosporum (strain NZE10 / CBS 128990)</name>
    <name type="common">Red band needle blight fungus</name>
    <name type="synonym">Mycosphaerella pini</name>
    <dbReference type="NCBI Taxonomy" id="675120"/>
    <lineage>
        <taxon>Eukaryota</taxon>
        <taxon>Fungi</taxon>
        <taxon>Dikarya</taxon>
        <taxon>Ascomycota</taxon>
        <taxon>Pezizomycotina</taxon>
        <taxon>Dothideomycetes</taxon>
        <taxon>Dothideomycetidae</taxon>
        <taxon>Mycosphaerellales</taxon>
        <taxon>Mycosphaerellaceae</taxon>
        <taxon>Dothistroma</taxon>
    </lineage>
</organism>
<evidence type="ECO:0000250" key="1">
    <source>
        <dbReference type="UniProtKB" id="Q12437"/>
    </source>
</evidence>
<evidence type="ECO:0000255" key="2"/>
<evidence type="ECO:0000255" key="3">
    <source>
        <dbReference type="PROSITE-ProRule" id="PRU00498"/>
    </source>
</evidence>
<evidence type="ECO:0000269" key="4">
    <source>
    </source>
</evidence>
<evidence type="ECO:0000269" key="5">
    <source>
    </source>
</evidence>
<evidence type="ECO:0000269" key="6">
    <source>
    </source>
</evidence>
<evidence type="ECO:0000269" key="7">
    <source>
    </source>
</evidence>
<evidence type="ECO:0000303" key="8">
    <source>
    </source>
</evidence>
<evidence type="ECO:0000303" key="9">
    <source>
    </source>
</evidence>
<evidence type="ECO:0000305" key="10"/>
<evidence type="ECO:0000305" key="11">
    <source>
    </source>
</evidence>
<evidence type="ECO:0000305" key="12">
    <source>
    </source>
</evidence>
<evidence type="ECO:0000305" key="13">
    <source>
    </source>
</evidence>
<dbReference type="EC" id="1.-.-.-" evidence="1"/>
<dbReference type="EMBL" id="KB446546">
    <property type="protein sequence ID" value="EME38862.1"/>
    <property type="molecule type" value="Genomic_DNA"/>
</dbReference>
<dbReference type="STRING" id="675120.M2XHE6"/>
<dbReference type="GlyCosmos" id="M2XHE6">
    <property type="glycosylation" value="3 sites, No reported glycans"/>
</dbReference>
<dbReference type="EnsemblFungi" id="EME38862">
    <property type="protein sequence ID" value="EME38862"/>
    <property type="gene ID" value="DOTSEDRAFT_75546"/>
</dbReference>
<dbReference type="eggNOG" id="ENOG502SM0C">
    <property type="taxonomic scope" value="Eukaryota"/>
</dbReference>
<dbReference type="HOGENOM" id="CLU_090039_0_0_1"/>
<dbReference type="OMA" id="GAAMCEI"/>
<dbReference type="OrthoDB" id="10254221at2759"/>
<dbReference type="Proteomes" id="UP000016933">
    <property type="component" value="Unassembled WGS sequence"/>
</dbReference>
<dbReference type="GO" id="GO:0016646">
    <property type="term" value="F:oxidoreductase activity, acting on the CH-NH group of donors, NAD or NADP as acceptor"/>
    <property type="evidence" value="ECO:0007669"/>
    <property type="project" value="TreeGrafter"/>
</dbReference>
<dbReference type="Gene3D" id="3.40.50.720">
    <property type="entry name" value="NAD(P)-binding Rossmann-like Domain"/>
    <property type="match status" value="1"/>
</dbReference>
<dbReference type="InterPro" id="IPR036291">
    <property type="entry name" value="NAD(P)-bd_dom_sf"/>
</dbReference>
<dbReference type="InterPro" id="IPR051606">
    <property type="entry name" value="Polyketide_Oxido-like"/>
</dbReference>
<dbReference type="PANTHER" id="PTHR43355">
    <property type="entry name" value="FLAVIN REDUCTASE (NADPH)"/>
    <property type="match status" value="1"/>
</dbReference>
<dbReference type="PANTHER" id="PTHR43355:SF2">
    <property type="entry name" value="FLAVIN REDUCTASE (NADPH)"/>
    <property type="match status" value="1"/>
</dbReference>
<dbReference type="SUPFAM" id="SSF51735">
    <property type="entry name" value="NAD(P)-binding Rossmann-fold domains"/>
    <property type="match status" value="1"/>
</dbReference>
<protein>
    <recommendedName>
        <fullName evidence="1">Averufin oxidase A</fullName>
        <ecNumber evidence="1">1.-.-.-</ecNumber>
    </recommendedName>
    <alternativeName>
        <fullName evidence="9">Dothistromin biosynthesis protein avfA</fullName>
    </alternativeName>
</protein>
<accession>M2XHE6</accession>
<keyword id="KW-0325">Glycoprotein</keyword>
<keyword id="KW-0560">Oxidoreductase</keyword>
<keyword id="KW-1185">Reference proteome</keyword>
<keyword id="KW-0732">Signal</keyword>